<protein>
    <recommendedName>
        <fullName evidence="1">NADH-quinone oxidoreductase subunit K 1</fullName>
        <ecNumber evidence="1">7.1.1.-</ecNumber>
    </recommendedName>
    <alternativeName>
        <fullName evidence="1">NADH dehydrogenase I subunit K 1</fullName>
    </alternativeName>
    <alternativeName>
        <fullName evidence="1">NDH-1 subunit K 1</fullName>
    </alternativeName>
</protein>
<proteinExistence type="inferred from homology"/>
<feature type="chain" id="PRO_5000003144" description="NADH-quinone oxidoreductase subunit K 1">
    <location>
        <begin position="1"/>
        <end position="103"/>
    </location>
</feature>
<feature type="transmembrane region" description="Helical" evidence="1">
    <location>
        <begin position="7"/>
        <end position="27"/>
    </location>
</feature>
<feature type="transmembrane region" description="Helical" evidence="1">
    <location>
        <begin position="31"/>
        <end position="51"/>
    </location>
</feature>
<feature type="transmembrane region" description="Helical" evidence="1">
    <location>
        <begin position="63"/>
        <end position="83"/>
    </location>
</feature>
<evidence type="ECO:0000255" key="1">
    <source>
        <dbReference type="HAMAP-Rule" id="MF_01456"/>
    </source>
</evidence>
<comment type="function">
    <text evidence="1">NDH-1 shuttles electrons from NADH, via FMN and iron-sulfur (Fe-S) centers, to quinones in the respiratory chain. The immediate electron acceptor for the enzyme in this species is believed to be ubiquinone. Couples the redox reaction to proton translocation (for every two electrons transferred, four hydrogen ions are translocated across the cytoplasmic membrane), and thus conserves the redox energy in a proton gradient.</text>
</comment>
<comment type="catalytic activity">
    <reaction evidence="1">
        <text>a quinone + NADH + 5 H(+)(in) = a quinol + NAD(+) + 4 H(+)(out)</text>
        <dbReference type="Rhea" id="RHEA:57888"/>
        <dbReference type="ChEBI" id="CHEBI:15378"/>
        <dbReference type="ChEBI" id="CHEBI:24646"/>
        <dbReference type="ChEBI" id="CHEBI:57540"/>
        <dbReference type="ChEBI" id="CHEBI:57945"/>
        <dbReference type="ChEBI" id="CHEBI:132124"/>
    </reaction>
</comment>
<comment type="subunit">
    <text evidence="1">NDH-1 is composed of 14 different subunits. Subunits NuoA, H, J, K, L, M, N constitute the membrane sector of the complex.</text>
</comment>
<comment type="subcellular location">
    <subcellularLocation>
        <location evidence="1">Cell inner membrane</location>
        <topology evidence="1">Multi-pass membrane protein</topology>
    </subcellularLocation>
</comment>
<comment type="similarity">
    <text evidence="1">Belongs to the complex I subunit 4L family.</text>
</comment>
<keyword id="KW-0997">Cell inner membrane</keyword>
<keyword id="KW-1003">Cell membrane</keyword>
<keyword id="KW-0472">Membrane</keyword>
<keyword id="KW-0520">NAD</keyword>
<keyword id="KW-0874">Quinone</keyword>
<keyword id="KW-1278">Translocase</keyword>
<keyword id="KW-0812">Transmembrane</keyword>
<keyword id="KW-1133">Transmembrane helix</keyword>
<keyword id="KW-0813">Transport</keyword>
<keyword id="KW-0830">Ubiquinone</keyword>
<accession>Q02CT4</accession>
<dbReference type="EC" id="7.1.1.-" evidence="1"/>
<dbReference type="EMBL" id="CP000473">
    <property type="protein sequence ID" value="ABJ81132.1"/>
    <property type="molecule type" value="Genomic_DNA"/>
</dbReference>
<dbReference type="SMR" id="Q02CT4"/>
<dbReference type="FunCoup" id="Q02CT4">
    <property type="interactions" value="284"/>
</dbReference>
<dbReference type="STRING" id="234267.Acid_0117"/>
<dbReference type="KEGG" id="sus:Acid_0117"/>
<dbReference type="eggNOG" id="COG0713">
    <property type="taxonomic scope" value="Bacteria"/>
</dbReference>
<dbReference type="HOGENOM" id="CLU_144724_0_0_0"/>
<dbReference type="InParanoid" id="Q02CT4"/>
<dbReference type="OrthoDB" id="9810120at2"/>
<dbReference type="GO" id="GO:0030964">
    <property type="term" value="C:NADH dehydrogenase complex"/>
    <property type="evidence" value="ECO:0007669"/>
    <property type="project" value="TreeGrafter"/>
</dbReference>
<dbReference type="GO" id="GO:0005886">
    <property type="term" value="C:plasma membrane"/>
    <property type="evidence" value="ECO:0007669"/>
    <property type="project" value="UniProtKB-SubCell"/>
</dbReference>
<dbReference type="GO" id="GO:0050136">
    <property type="term" value="F:NADH:ubiquinone reductase (non-electrogenic) activity"/>
    <property type="evidence" value="ECO:0007669"/>
    <property type="project" value="UniProtKB-UniRule"/>
</dbReference>
<dbReference type="GO" id="GO:0048038">
    <property type="term" value="F:quinone binding"/>
    <property type="evidence" value="ECO:0007669"/>
    <property type="project" value="UniProtKB-KW"/>
</dbReference>
<dbReference type="GO" id="GO:0042773">
    <property type="term" value="P:ATP synthesis coupled electron transport"/>
    <property type="evidence" value="ECO:0007669"/>
    <property type="project" value="InterPro"/>
</dbReference>
<dbReference type="FunFam" id="1.10.287.3510:FF:000001">
    <property type="entry name" value="NADH-quinone oxidoreductase subunit K"/>
    <property type="match status" value="1"/>
</dbReference>
<dbReference type="Gene3D" id="1.10.287.3510">
    <property type="match status" value="1"/>
</dbReference>
<dbReference type="HAMAP" id="MF_01456">
    <property type="entry name" value="NDH1_NuoK"/>
    <property type="match status" value="1"/>
</dbReference>
<dbReference type="InterPro" id="IPR001133">
    <property type="entry name" value="NADH_UbQ_OxRdtase_chain4L/K"/>
</dbReference>
<dbReference type="InterPro" id="IPR039428">
    <property type="entry name" value="NUOK/Mnh_C1-like"/>
</dbReference>
<dbReference type="NCBIfam" id="NF004320">
    <property type="entry name" value="PRK05715.1-2"/>
    <property type="match status" value="1"/>
</dbReference>
<dbReference type="NCBIfam" id="NF004321">
    <property type="entry name" value="PRK05715.1-3"/>
    <property type="match status" value="1"/>
</dbReference>
<dbReference type="NCBIfam" id="NF004323">
    <property type="entry name" value="PRK05715.1-5"/>
    <property type="match status" value="1"/>
</dbReference>
<dbReference type="PANTHER" id="PTHR11434:SF21">
    <property type="entry name" value="NADH DEHYDROGENASE SUBUNIT 4L-RELATED"/>
    <property type="match status" value="1"/>
</dbReference>
<dbReference type="PANTHER" id="PTHR11434">
    <property type="entry name" value="NADH-UBIQUINONE OXIDOREDUCTASE SUBUNIT ND4L"/>
    <property type="match status" value="1"/>
</dbReference>
<dbReference type="Pfam" id="PF00420">
    <property type="entry name" value="Oxidored_q2"/>
    <property type="match status" value="1"/>
</dbReference>
<reference key="1">
    <citation type="journal article" date="2009" name="Appl. Environ. Microbiol.">
        <title>Three genomes from the phylum Acidobacteria provide insight into the lifestyles of these microorganisms in soils.</title>
        <authorList>
            <person name="Ward N.L."/>
            <person name="Challacombe J.F."/>
            <person name="Janssen P.H."/>
            <person name="Henrissat B."/>
            <person name="Coutinho P.M."/>
            <person name="Wu M."/>
            <person name="Xie G."/>
            <person name="Haft D.H."/>
            <person name="Sait M."/>
            <person name="Badger J."/>
            <person name="Barabote R.D."/>
            <person name="Bradley B."/>
            <person name="Brettin T.S."/>
            <person name="Brinkac L.M."/>
            <person name="Bruce D."/>
            <person name="Creasy T."/>
            <person name="Daugherty S.C."/>
            <person name="Davidsen T.M."/>
            <person name="DeBoy R.T."/>
            <person name="Detter J.C."/>
            <person name="Dodson R.J."/>
            <person name="Durkin A.S."/>
            <person name="Ganapathy A."/>
            <person name="Gwinn-Giglio M."/>
            <person name="Han C.S."/>
            <person name="Khouri H."/>
            <person name="Kiss H."/>
            <person name="Kothari S.P."/>
            <person name="Madupu R."/>
            <person name="Nelson K.E."/>
            <person name="Nelson W.C."/>
            <person name="Paulsen I."/>
            <person name="Penn K."/>
            <person name="Ren Q."/>
            <person name="Rosovitz M.J."/>
            <person name="Selengut J.D."/>
            <person name="Shrivastava S."/>
            <person name="Sullivan S.A."/>
            <person name="Tapia R."/>
            <person name="Thompson L.S."/>
            <person name="Watkins K.L."/>
            <person name="Yang Q."/>
            <person name="Yu C."/>
            <person name="Zafar N."/>
            <person name="Zhou L."/>
            <person name="Kuske C.R."/>
        </authorList>
    </citation>
    <scope>NUCLEOTIDE SEQUENCE [LARGE SCALE GENOMIC DNA]</scope>
    <source>
        <strain>Ellin6076</strain>
    </source>
</reference>
<organism>
    <name type="scientific">Solibacter usitatus (strain Ellin6076)</name>
    <dbReference type="NCBI Taxonomy" id="234267"/>
    <lineage>
        <taxon>Bacteria</taxon>
        <taxon>Pseudomonadati</taxon>
        <taxon>Acidobacteriota</taxon>
        <taxon>Terriglobia</taxon>
        <taxon>Bryobacterales</taxon>
        <taxon>Solibacteraceae</taxon>
        <taxon>Candidatus Solibacter</taxon>
    </lineage>
</organism>
<gene>
    <name evidence="1" type="primary">nuoK1</name>
    <name type="ordered locus">Acid_0117</name>
</gene>
<name>NUOK1_SOLUE</name>
<sequence>MMNAVPISWFLTLSAILFALGVAGFLFRRNIITVFMSIELMLNAVNLSFVTFSYQHKEVAGHLFTFFVMVVAAAEAAVGLAIILTVFKNRSTLNIDDVNSMKN</sequence>